<protein>
    <recommendedName>
        <fullName>Cell wall alpha-1,3-glucan synthase mok13</fullName>
        <ecNumber>2.4.1.183</ecNumber>
    </recommendedName>
</protein>
<name>MOK13_SCHPO</name>
<feature type="chain" id="PRO_0000080331" description="Cell wall alpha-1,3-glucan synthase mok13">
    <location>
        <begin position="1"/>
        <end position="2358"/>
    </location>
</feature>
<feature type="region of interest" description="Disordered" evidence="1">
    <location>
        <begin position="1645"/>
        <end position="1669"/>
    </location>
</feature>
<feature type="compositionally biased region" description="Basic and acidic residues" evidence="1">
    <location>
        <begin position="1645"/>
        <end position="1659"/>
    </location>
</feature>
<feature type="sequence conflict" description="In Ref. 1." evidence="2" ref="1">
    <original>V</original>
    <variation>VRRVMLLCSLTNKV</variation>
    <location>
        <position position="120"/>
    </location>
</feature>
<proteinExistence type="inferred from homology"/>
<reference key="1">
    <citation type="submission" date="1998-10" db="EMBL/GenBank/DDBJ databases">
        <title>Fission yeast alpha-glucan synthase Mok1 localizes closely with actin and play a role essential for cell morphogenesis and protein kinase C function.</title>
        <authorList>
            <person name="Katayama S."/>
            <person name="Dai H."/>
            <person name="Arellano M."/>
            <person name="Perez P."/>
            <person name="Toda T."/>
        </authorList>
    </citation>
    <scope>NUCLEOTIDE SEQUENCE [GENOMIC DNA]</scope>
    <source>
        <strain>972 / ATCC 24843</strain>
    </source>
</reference>
<reference key="2">
    <citation type="journal article" date="2002" name="Nature">
        <title>The genome sequence of Schizosaccharomyces pombe.</title>
        <authorList>
            <person name="Wood V."/>
            <person name="Gwilliam R."/>
            <person name="Rajandream M.A."/>
            <person name="Lyne M.H."/>
            <person name="Lyne R."/>
            <person name="Stewart A."/>
            <person name="Sgouros J.G."/>
            <person name="Peat N."/>
            <person name="Hayles J."/>
            <person name="Baker S.G."/>
            <person name="Basham D."/>
            <person name="Bowman S."/>
            <person name="Brooks K."/>
            <person name="Brown D."/>
            <person name="Brown S."/>
            <person name="Chillingworth T."/>
            <person name="Churcher C.M."/>
            <person name="Collins M."/>
            <person name="Connor R."/>
            <person name="Cronin A."/>
            <person name="Davis P."/>
            <person name="Feltwell T."/>
            <person name="Fraser A."/>
            <person name="Gentles S."/>
            <person name="Goble A."/>
            <person name="Hamlin N."/>
            <person name="Harris D.E."/>
            <person name="Hidalgo J."/>
            <person name="Hodgson G."/>
            <person name="Holroyd S."/>
            <person name="Hornsby T."/>
            <person name="Howarth S."/>
            <person name="Huckle E.J."/>
            <person name="Hunt S."/>
            <person name="Jagels K."/>
            <person name="James K.D."/>
            <person name="Jones L."/>
            <person name="Jones M."/>
            <person name="Leather S."/>
            <person name="McDonald S."/>
            <person name="McLean J."/>
            <person name="Mooney P."/>
            <person name="Moule S."/>
            <person name="Mungall K.L."/>
            <person name="Murphy L.D."/>
            <person name="Niblett D."/>
            <person name="Odell C."/>
            <person name="Oliver K."/>
            <person name="O'Neil S."/>
            <person name="Pearson D."/>
            <person name="Quail M.A."/>
            <person name="Rabbinowitsch E."/>
            <person name="Rutherford K.M."/>
            <person name="Rutter S."/>
            <person name="Saunders D."/>
            <person name="Seeger K."/>
            <person name="Sharp S."/>
            <person name="Skelton J."/>
            <person name="Simmonds M.N."/>
            <person name="Squares R."/>
            <person name="Squares S."/>
            <person name="Stevens K."/>
            <person name="Taylor K."/>
            <person name="Taylor R.G."/>
            <person name="Tivey A."/>
            <person name="Walsh S.V."/>
            <person name="Warren T."/>
            <person name="Whitehead S."/>
            <person name="Woodward J.R."/>
            <person name="Volckaert G."/>
            <person name="Aert R."/>
            <person name="Robben J."/>
            <person name="Grymonprez B."/>
            <person name="Weltjens I."/>
            <person name="Vanstreels E."/>
            <person name="Rieger M."/>
            <person name="Schaefer M."/>
            <person name="Mueller-Auer S."/>
            <person name="Gabel C."/>
            <person name="Fuchs M."/>
            <person name="Duesterhoeft A."/>
            <person name="Fritzc C."/>
            <person name="Holzer E."/>
            <person name="Moestl D."/>
            <person name="Hilbert H."/>
            <person name="Borzym K."/>
            <person name="Langer I."/>
            <person name="Beck A."/>
            <person name="Lehrach H."/>
            <person name="Reinhardt R."/>
            <person name="Pohl T.M."/>
            <person name="Eger P."/>
            <person name="Zimmermann W."/>
            <person name="Wedler H."/>
            <person name="Wambutt R."/>
            <person name="Purnelle B."/>
            <person name="Goffeau A."/>
            <person name="Cadieu E."/>
            <person name="Dreano S."/>
            <person name="Gloux S."/>
            <person name="Lelaure V."/>
            <person name="Mottier S."/>
            <person name="Galibert F."/>
            <person name="Aves S.J."/>
            <person name="Xiang Z."/>
            <person name="Hunt C."/>
            <person name="Moore K."/>
            <person name="Hurst S.M."/>
            <person name="Lucas M."/>
            <person name="Rochet M."/>
            <person name="Gaillardin C."/>
            <person name="Tallada V.A."/>
            <person name="Garzon A."/>
            <person name="Thode G."/>
            <person name="Daga R.R."/>
            <person name="Cruzado L."/>
            <person name="Jimenez J."/>
            <person name="Sanchez M."/>
            <person name="del Rey F."/>
            <person name="Benito J."/>
            <person name="Dominguez A."/>
            <person name="Revuelta J.L."/>
            <person name="Moreno S."/>
            <person name="Armstrong J."/>
            <person name="Forsburg S.L."/>
            <person name="Cerutti L."/>
            <person name="Lowe T."/>
            <person name="McCombie W.R."/>
            <person name="Paulsen I."/>
            <person name="Potashkin J."/>
            <person name="Shpakovski G.V."/>
            <person name="Ussery D."/>
            <person name="Barrell B.G."/>
            <person name="Nurse P."/>
        </authorList>
    </citation>
    <scope>NUCLEOTIDE SEQUENCE [LARGE SCALE GENOMIC DNA]</scope>
    <source>
        <strain>972 / ATCC 24843</strain>
    </source>
</reference>
<evidence type="ECO:0000256" key="1">
    <source>
        <dbReference type="SAM" id="MobiDB-lite"/>
    </source>
</evidence>
<evidence type="ECO:0000305" key="2"/>
<sequence>MRNKNILVLNLILSIPRLVFTAKYDERESLWNLNQNQSATDPLDYWGKWENHQYHPSPDDWQVPFYTVILDKWKDGDPRNNEANNTIYEYDIYETGFRNGGDIIGLKDSLDYLEIMGIKVIYIAGTPFLNQPWGADQYSPLDYTILDHHSGTIAQWRDTIEEIHRRGFYLVLDLTISTLGDLIGFRKYLNSTTPFSLFEHEAVWKSNVIYPDWNFTNKYDPKCELPRFWGEDGAPVVIDYVGCYDSDFDQYGDTEAFGTHPDWERQLSKFASVQDRLREWRPSVSEKLKHFACMIIAMLDVDGFRIDKATQITVDFLASWAHSVRGCAATFNKKNFFIPGEVTGSSSYGSIYYGRGRQPDQRPPSILTSLNSSSLKENYFLREPKANALDASAFHYSLYRAMTRFLQMDGDLQVGHDLPVDFTDLWNAMAVNEDFYNPNTHKVDPRHMLGITNHDVFRWSAIEFGLERLLLGTMITYFLFPGAPSIYYGDEQGFYVLDNTANNYLYGRQAMPSSIAWKVHGCYALASDQYPELPVIKAYQGCNDDWNIMDHFDFAKPELKMFKIFNFIREQYPALKSGWKSVKLRNWTEYVHFPNSGKTPTEVGVWSIVRGALETLQNFDARNNTAWNGDIWILYTNQNRTTTLDYQCSSSNSVVSPYASGLTLKNLIYPFEEYILQESNKYSSNLKSYYGCIPNIEFPPWGFKILIPKKYYVRYPPQITSFNPQHDSRIYNHNGKQKLVISFTETMDCNEITSKLQFSSKTESGKVMKVDKETVKCSVSNNSADSYYFGLAPARFHWSGDLINIADGIHEIKLQRVHSQDHQSMSDSMYKLLLRFGKLDNPMVFSTANRSSSILSQENEKLYINHKAPGADLFRFSFDYGLHWSEWIDYLSNKTECTEFANNISLKTWKGHHVIVQYWSRLTASANYIQEGGLGSLSSFPHLYMNGPYNQWGFDSGIPNRLIYKNCSWHKTFISDVFPTKFQFNVYNFDESGMPDQKKVYGTIGNSTVLVRLPPSELKESVTWIKEAPPSNFLTWEIIISDLTRTYHLIPRGSSTVSIILFSLFLVSPLICALATMLAFQKFFYQVRLNKGIEKKQEWKEKLLGPFSRISQSNINQGFSHQVALNNSVKSVHPKISRKLILVATLEYDIPDWDIKIKIGGLGVMAELMGKHLTHHDLIWVVPRVGDVNYPDGQELAPLEVVVLDQVYEVRVYSHNLRNITYILLEAPVFRKQTSAEPYPARMDDLSSAIFYSAWNQCIAGIIRRYPIDVYHINDYHGALAPCYLLPNVIPCVLSLHNAEFQGLWPLRTQAEKNEVCAVYNISTKICTKYIQFGNVFNLLHAGVSYIRIHQKGYGVVGVSNKYGKRSKARYPIFWGLKKVGKLPNPDPLDTAQLDDPTNITEEITIDLTAEAEKRAFKRDAQKWTNLELDDSADLLVFVGRWSMQKGIDLIADIAPTLLQDFNAQLITIGPIIDLYGKFAAEKLNALMKKYPKRVYCRPEFTHLPPCIFSGADFVLIPSRDEPFGLVAVEFGRKGALGIGARVGGLGQMPGWWYSVESNATSHVLQQFEEACRKALSSSAEKRALLRAKSAKQRFPVLEWISKLDHLMDNCIRLNVGQRQQGSSSHSMKFRSKNDLSSIKLSTKEGLENEENELKDKAPPNEPNVGSLFLFNKSSMGSVGGPGHYKATDLSQELETNDQDIEYNEFYSQLDTSTSDIFQDTSVDGFPDLQVSSDINVRNDRLSSFVMSSEDLRSSDGHPENSDSVLETISSVHHRSPINQVVRNLNESQLSLDSVISMNLNKEFALTKTENDFTDDNGRALNYFSQKLEELDPKNSVNELCIETFILKMKKEWYDGLRNIRFGIQRPNLLIYDEDKKFINTEHFLGSKVNLNSVTSLGNFNGSSPNSFLFLLKNRTMRIKCFMQMRIGDWPVYSIFLSVGQILAATSYQLVLLSGSSAQFSTQLYIVGSIYTVSSVFWWYLYRMLPSVASLSLPFLLYCASFLLIGISSFINENMYLRLWISHIASWIYAVASASGSLYFSLNFGDEAGAGVVSWIVRACIVQGFQQIWACCLWYWGSYIDRSMQECHSFPHEVYPLGLIAVFSWPLALVMLLFAILLIFGLPDYYWESPGNIPAFYTALLRRKLVLWFFVATILQNYWLSTLYGRSWKYLWGGSLLAPWKMLTIAFFLFLSMWIIMLMFLGRKSLTHSWLLPVFGVGLGSPRWLQMMWGTSNIGVYLPWAGVAGPIVGRILWIWLGVLDSVQGVGVGMILLQTLTRRHIATTLIAGQIIGTLTSMLARATAPNRLGPGLVFLDLTSWRFEDGAKIFRSAPFWICLISQIAVSAGYLLFFRRENLSRP</sequence>
<accession>Q9Y719</accession>
<accession>O94638</accession>
<comment type="catalytic activity">
    <reaction>
        <text>[(1-&gt;3)-alpha-D-glucosyl](n) + UDP-alpha-D-glucose = [(1-&gt;3)-alpha-D-glucosyl](n+1) + UDP + H(+)</text>
        <dbReference type="Rhea" id="RHEA:19749"/>
        <dbReference type="Rhea" id="RHEA-COMP:11150"/>
        <dbReference type="Rhea" id="RHEA-COMP:11151"/>
        <dbReference type="ChEBI" id="CHEBI:15378"/>
        <dbReference type="ChEBI" id="CHEBI:28100"/>
        <dbReference type="ChEBI" id="CHEBI:58223"/>
        <dbReference type="ChEBI" id="CHEBI:58885"/>
        <dbReference type="EC" id="2.4.1.183"/>
    </reaction>
</comment>
<comment type="similarity">
    <text evidence="2">Belongs to the glycosyltransferase group 1 family.</text>
</comment>
<dbReference type="EC" id="2.4.1.183"/>
<dbReference type="EMBL" id="AB018382">
    <property type="protein sequence ID" value="BAA76559.1"/>
    <property type="molecule type" value="Genomic_DNA"/>
</dbReference>
<dbReference type="EMBL" id="CU329671">
    <property type="protein sequence ID" value="CAB38509.1"/>
    <property type="molecule type" value="Genomic_DNA"/>
</dbReference>
<dbReference type="PIR" id="T39569">
    <property type="entry name" value="T39569"/>
</dbReference>
<dbReference type="PIR" id="T43432">
    <property type="entry name" value="T43432"/>
</dbReference>
<dbReference type="RefSeq" id="NP_596500.1">
    <property type="nucleotide sequence ID" value="NM_001022421.2"/>
</dbReference>
<dbReference type="SMR" id="Q9Y719"/>
<dbReference type="BioGRID" id="276551">
    <property type="interactions" value="2"/>
</dbReference>
<dbReference type="FunCoup" id="Q9Y719">
    <property type="interactions" value="6"/>
</dbReference>
<dbReference type="STRING" id="284812.Q9Y719"/>
<dbReference type="CAZy" id="GH13">
    <property type="family name" value="Glycoside Hydrolase Family 13"/>
</dbReference>
<dbReference type="CAZy" id="GT5">
    <property type="family name" value="Glycosyltransferase Family 5"/>
</dbReference>
<dbReference type="iPTMnet" id="Q9Y719"/>
<dbReference type="PaxDb" id="4896-SPBC16D10.05.1"/>
<dbReference type="EnsemblFungi" id="SPBC16D10.05.1">
    <property type="protein sequence ID" value="SPBC16D10.05.1:pep"/>
    <property type="gene ID" value="SPBC16D10.05"/>
</dbReference>
<dbReference type="GeneID" id="2540007"/>
<dbReference type="KEGG" id="spo:2540007"/>
<dbReference type="PomBase" id="SPBC16D10.05">
    <property type="gene designation" value="mok13"/>
</dbReference>
<dbReference type="VEuPathDB" id="FungiDB:SPBC16D10.05"/>
<dbReference type="eggNOG" id="ENOG502QSGC">
    <property type="taxonomic scope" value="Eukaryota"/>
</dbReference>
<dbReference type="HOGENOM" id="CLU_000488_0_0_1"/>
<dbReference type="InParanoid" id="Q9Y719"/>
<dbReference type="OMA" id="AWRDHGC"/>
<dbReference type="PhylomeDB" id="Q9Y719"/>
<dbReference type="PRO" id="PR:Q9Y719"/>
<dbReference type="Proteomes" id="UP000002485">
    <property type="component" value="Chromosome II"/>
</dbReference>
<dbReference type="GO" id="GO:0005737">
    <property type="term" value="C:cytoplasm"/>
    <property type="evidence" value="ECO:0000314"/>
    <property type="project" value="PomBase"/>
</dbReference>
<dbReference type="GO" id="GO:0009277">
    <property type="term" value="C:fungal-type cell wall"/>
    <property type="evidence" value="ECO:0000318"/>
    <property type="project" value="GO_Central"/>
</dbReference>
<dbReference type="GO" id="GO:0005628">
    <property type="term" value="C:prospore membrane"/>
    <property type="evidence" value="ECO:0000314"/>
    <property type="project" value="PomBase"/>
</dbReference>
<dbReference type="GO" id="GO:0047657">
    <property type="term" value="F:alpha-1,3-glucan synthase activity"/>
    <property type="evidence" value="ECO:0000315"/>
    <property type="project" value="PomBase"/>
</dbReference>
<dbReference type="GO" id="GO:0070591">
    <property type="term" value="P:ascospore wall biogenesis"/>
    <property type="evidence" value="ECO:0000315"/>
    <property type="project" value="PomBase"/>
</dbReference>
<dbReference type="GO" id="GO:0071555">
    <property type="term" value="P:cell wall organization"/>
    <property type="evidence" value="ECO:0007669"/>
    <property type="project" value="UniProtKB-KW"/>
</dbReference>
<dbReference type="GO" id="GO:0070600">
    <property type="term" value="P:fungal-type cell wall (1-&gt;3)-alpha-glucan biosynthetic process"/>
    <property type="evidence" value="ECO:0000318"/>
    <property type="project" value="GO_Central"/>
</dbReference>
<dbReference type="CDD" id="cd11323">
    <property type="entry name" value="AmyAc_AGS"/>
    <property type="match status" value="1"/>
</dbReference>
<dbReference type="CDD" id="cd03791">
    <property type="entry name" value="GT5_Glycogen_synthase_DULL1-like"/>
    <property type="match status" value="1"/>
</dbReference>
<dbReference type="FunFam" id="3.40.50.2000:FF:000058">
    <property type="entry name" value="Alpha-1,3-glucan synthase Ags1"/>
    <property type="match status" value="1"/>
</dbReference>
<dbReference type="FunFam" id="3.20.20.80:FF:000073">
    <property type="entry name" value="Alpha-1,3-glucan synthase Ags2"/>
    <property type="match status" value="1"/>
</dbReference>
<dbReference type="FunFam" id="3.40.50.2000:FF:000052">
    <property type="entry name" value="Alpha-1,3-glucan synthase Ags2"/>
    <property type="match status" value="1"/>
</dbReference>
<dbReference type="Gene3D" id="3.40.50.2000">
    <property type="entry name" value="Glycogen Phosphorylase B"/>
    <property type="match status" value="2"/>
</dbReference>
<dbReference type="Gene3D" id="3.20.20.80">
    <property type="entry name" value="Glycosidases"/>
    <property type="match status" value="1"/>
</dbReference>
<dbReference type="InterPro" id="IPR006047">
    <property type="entry name" value="Glyco_hydro_13_cat_dom"/>
</dbReference>
<dbReference type="InterPro" id="IPR017853">
    <property type="entry name" value="Glycoside_hydrolase_SF"/>
</dbReference>
<dbReference type="InterPro" id="IPR013534">
    <property type="entry name" value="Starch_synth_cat_dom"/>
</dbReference>
<dbReference type="PANTHER" id="PTHR47182">
    <property type="entry name" value="CELL WALL ALPHA-1,3-GLUCAN SYNTHASE AGS1-RELATED"/>
    <property type="match status" value="1"/>
</dbReference>
<dbReference type="PANTHER" id="PTHR47182:SF4">
    <property type="entry name" value="CELL WALL ALPHA-1,3-GLUCAN SYNTHASE MOK13"/>
    <property type="match status" value="1"/>
</dbReference>
<dbReference type="Pfam" id="PF00128">
    <property type="entry name" value="Alpha-amylase"/>
    <property type="match status" value="1"/>
</dbReference>
<dbReference type="Pfam" id="PF13692">
    <property type="entry name" value="Glyco_trans_1_4"/>
    <property type="match status" value="1"/>
</dbReference>
<dbReference type="Pfam" id="PF08323">
    <property type="entry name" value="Glyco_transf_5"/>
    <property type="match status" value="1"/>
</dbReference>
<dbReference type="SMART" id="SM00642">
    <property type="entry name" value="Aamy"/>
    <property type="match status" value="1"/>
</dbReference>
<dbReference type="SUPFAM" id="SSF51445">
    <property type="entry name" value="(Trans)glycosidases"/>
    <property type="match status" value="1"/>
</dbReference>
<dbReference type="SUPFAM" id="SSF53756">
    <property type="entry name" value="UDP-Glycosyltransferase/glycogen phosphorylase"/>
    <property type="match status" value="1"/>
</dbReference>
<gene>
    <name type="primary">mok13</name>
    <name type="ORF">SPBC16D10.05</name>
</gene>
<organism>
    <name type="scientific">Schizosaccharomyces pombe (strain 972 / ATCC 24843)</name>
    <name type="common">Fission yeast</name>
    <dbReference type="NCBI Taxonomy" id="284812"/>
    <lineage>
        <taxon>Eukaryota</taxon>
        <taxon>Fungi</taxon>
        <taxon>Dikarya</taxon>
        <taxon>Ascomycota</taxon>
        <taxon>Taphrinomycotina</taxon>
        <taxon>Schizosaccharomycetes</taxon>
        <taxon>Schizosaccharomycetales</taxon>
        <taxon>Schizosaccharomycetaceae</taxon>
        <taxon>Schizosaccharomyces</taxon>
    </lineage>
</organism>
<keyword id="KW-0961">Cell wall biogenesis/degradation</keyword>
<keyword id="KW-0328">Glycosyltransferase</keyword>
<keyword id="KW-1185">Reference proteome</keyword>
<keyword id="KW-0808">Transferase</keyword>